<feature type="chain" id="PRO_0000231113" description="3-dehydroquinate synthase">
    <location>
        <begin position="1"/>
        <end position="356"/>
    </location>
</feature>
<feature type="binding site" evidence="1">
    <location>
        <begin position="69"/>
        <end position="74"/>
    </location>
    <ligand>
        <name>NAD(+)</name>
        <dbReference type="ChEBI" id="CHEBI:57540"/>
    </ligand>
</feature>
<feature type="binding site" evidence="1">
    <location>
        <begin position="103"/>
        <end position="107"/>
    </location>
    <ligand>
        <name>NAD(+)</name>
        <dbReference type="ChEBI" id="CHEBI:57540"/>
    </ligand>
</feature>
<feature type="binding site" evidence="1">
    <location>
        <begin position="127"/>
        <end position="128"/>
    </location>
    <ligand>
        <name>NAD(+)</name>
        <dbReference type="ChEBI" id="CHEBI:57540"/>
    </ligand>
</feature>
<feature type="binding site" evidence="1">
    <location>
        <position position="140"/>
    </location>
    <ligand>
        <name>NAD(+)</name>
        <dbReference type="ChEBI" id="CHEBI:57540"/>
    </ligand>
</feature>
<feature type="binding site" evidence="1">
    <location>
        <position position="149"/>
    </location>
    <ligand>
        <name>NAD(+)</name>
        <dbReference type="ChEBI" id="CHEBI:57540"/>
    </ligand>
</feature>
<feature type="binding site" evidence="1">
    <location>
        <position position="182"/>
    </location>
    <ligand>
        <name>Zn(2+)</name>
        <dbReference type="ChEBI" id="CHEBI:29105"/>
    </ligand>
</feature>
<feature type="binding site" evidence="1">
    <location>
        <position position="245"/>
    </location>
    <ligand>
        <name>Zn(2+)</name>
        <dbReference type="ChEBI" id="CHEBI:29105"/>
    </ligand>
</feature>
<feature type="binding site" evidence="1">
    <location>
        <position position="262"/>
    </location>
    <ligand>
        <name>Zn(2+)</name>
        <dbReference type="ChEBI" id="CHEBI:29105"/>
    </ligand>
</feature>
<sequence>MLELSVNLDERSYPIYIGQSTLQDNGRLVHHIGDCRPIIITNDTIAPLYLQGLLAQLATLNPLHFIIPDGEQYKSLTWFEKISAFLLENNCGRDTCLIALGGGVVGDLTGFVAACYQRGIPFIQMPTTLLSQVDSSVGGKTAVNHPLGKNMIGAFYQPQAVFIDTQSLHTLPAREFAAGMAEVIKYGLIYDTELFAYLEQNVERLQQLDEACLQHIIYRCCEIKALIVAQDEKEQGLRALLNLGHTFAHAIEAQMGYGVWLHGEAVATGMVLAAKLAYTRQDLTAEDVTRISGLIAQYSLPTQIPAVMTSEHFLQHMRKDKKNKKGTIRFILPTQFGQCALVDDVSDDQVRALIEQ</sequence>
<comment type="function">
    <text evidence="1">Catalyzes the conversion of 3-deoxy-D-arabino-heptulosonate 7-phosphate (DAHP) to dehydroquinate (DHQ).</text>
</comment>
<comment type="catalytic activity">
    <reaction evidence="1">
        <text>7-phospho-2-dehydro-3-deoxy-D-arabino-heptonate = 3-dehydroquinate + phosphate</text>
        <dbReference type="Rhea" id="RHEA:21968"/>
        <dbReference type="ChEBI" id="CHEBI:32364"/>
        <dbReference type="ChEBI" id="CHEBI:43474"/>
        <dbReference type="ChEBI" id="CHEBI:58394"/>
        <dbReference type="EC" id="4.2.3.4"/>
    </reaction>
</comment>
<comment type="cofactor">
    <cofactor evidence="1">
        <name>Co(2+)</name>
        <dbReference type="ChEBI" id="CHEBI:48828"/>
    </cofactor>
    <cofactor evidence="1">
        <name>Zn(2+)</name>
        <dbReference type="ChEBI" id="CHEBI:29105"/>
    </cofactor>
    <text evidence="1">Binds 1 divalent metal cation per subunit. Can use either Co(2+) or Zn(2+).</text>
</comment>
<comment type="cofactor">
    <cofactor evidence="1">
        <name>NAD(+)</name>
        <dbReference type="ChEBI" id="CHEBI:57540"/>
    </cofactor>
</comment>
<comment type="pathway">
    <text evidence="1">Metabolic intermediate biosynthesis; chorismate biosynthesis; chorismate from D-erythrose 4-phosphate and phosphoenolpyruvate: step 2/7.</text>
</comment>
<comment type="subcellular location">
    <subcellularLocation>
        <location evidence="1">Cytoplasm</location>
    </subcellularLocation>
</comment>
<comment type="similarity">
    <text evidence="1">Belongs to the sugar phosphate cyclases superfamily. Dehydroquinate synthase family.</text>
</comment>
<gene>
    <name evidence="1" type="primary">aroB</name>
    <name type="ordered locus">PSHAa2714</name>
</gene>
<evidence type="ECO:0000255" key="1">
    <source>
        <dbReference type="HAMAP-Rule" id="MF_00110"/>
    </source>
</evidence>
<name>AROB_PSET1</name>
<accession>Q3IJA2</accession>
<proteinExistence type="inferred from homology"/>
<organism>
    <name type="scientific">Pseudoalteromonas translucida (strain TAC 125)</name>
    <dbReference type="NCBI Taxonomy" id="326442"/>
    <lineage>
        <taxon>Bacteria</taxon>
        <taxon>Pseudomonadati</taxon>
        <taxon>Pseudomonadota</taxon>
        <taxon>Gammaproteobacteria</taxon>
        <taxon>Alteromonadales</taxon>
        <taxon>Pseudoalteromonadaceae</taxon>
        <taxon>Pseudoalteromonas</taxon>
    </lineage>
</organism>
<keyword id="KW-0028">Amino-acid biosynthesis</keyword>
<keyword id="KW-0057">Aromatic amino acid biosynthesis</keyword>
<keyword id="KW-0170">Cobalt</keyword>
<keyword id="KW-0963">Cytoplasm</keyword>
<keyword id="KW-0456">Lyase</keyword>
<keyword id="KW-0479">Metal-binding</keyword>
<keyword id="KW-0520">NAD</keyword>
<keyword id="KW-0547">Nucleotide-binding</keyword>
<keyword id="KW-1185">Reference proteome</keyword>
<keyword id="KW-0862">Zinc</keyword>
<dbReference type="EC" id="4.2.3.4" evidence="1"/>
<dbReference type="EMBL" id="CR954246">
    <property type="protein sequence ID" value="CAI87762.1"/>
    <property type="molecule type" value="Genomic_DNA"/>
</dbReference>
<dbReference type="SMR" id="Q3IJA2"/>
<dbReference type="STRING" id="326442.PSHAa2714"/>
<dbReference type="KEGG" id="pha:PSHAa2714"/>
<dbReference type="PATRIC" id="fig|326442.8.peg.2624"/>
<dbReference type="eggNOG" id="COG0337">
    <property type="taxonomic scope" value="Bacteria"/>
</dbReference>
<dbReference type="HOGENOM" id="CLU_001201_0_2_6"/>
<dbReference type="BioCyc" id="PHAL326442:PSHA_RS13355-MONOMER"/>
<dbReference type="UniPathway" id="UPA00053">
    <property type="reaction ID" value="UER00085"/>
</dbReference>
<dbReference type="Proteomes" id="UP000006843">
    <property type="component" value="Chromosome I"/>
</dbReference>
<dbReference type="GO" id="GO:0005737">
    <property type="term" value="C:cytoplasm"/>
    <property type="evidence" value="ECO:0007669"/>
    <property type="project" value="UniProtKB-SubCell"/>
</dbReference>
<dbReference type="GO" id="GO:0003856">
    <property type="term" value="F:3-dehydroquinate synthase activity"/>
    <property type="evidence" value="ECO:0007669"/>
    <property type="project" value="UniProtKB-UniRule"/>
</dbReference>
<dbReference type="GO" id="GO:0046872">
    <property type="term" value="F:metal ion binding"/>
    <property type="evidence" value="ECO:0007669"/>
    <property type="project" value="UniProtKB-KW"/>
</dbReference>
<dbReference type="GO" id="GO:0000166">
    <property type="term" value="F:nucleotide binding"/>
    <property type="evidence" value="ECO:0007669"/>
    <property type="project" value="UniProtKB-KW"/>
</dbReference>
<dbReference type="GO" id="GO:0008652">
    <property type="term" value="P:amino acid biosynthetic process"/>
    <property type="evidence" value="ECO:0007669"/>
    <property type="project" value="UniProtKB-KW"/>
</dbReference>
<dbReference type="GO" id="GO:0009073">
    <property type="term" value="P:aromatic amino acid family biosynthetic process"/>
    <property type="evidence" value="ECO:0007669"/>
    <property type="project" value="UniProtKB-KW"/>
</dbReference>
<dbReference type="GO" id="GO:0009423">
    <property type="term" value="P:chorismate biosynthetic process"/>
    <property type="evidence" value="ECO:0007669"/>
    <property type="project" value="UniProtKB-UniRule"/>
</dbReference>
<dbReference type="CDD" id="cd08195">
    <property type="entry name" value="DHQS"/>
    <property type="match status" value="1"/>
</dbReference>
<dbReference type="FunFam" id="3.40.50.1970:FF:000001">
    <property type="entry name" value="3-dehydroquinate synthase"/>
    <property type="match status" value="1"/>
</dbReference>
<dbReference type="Gene3D" id="3.40.50.1970">
    <property type="match status" value="1"/>
</dbReference>
<dbReference type="Gene3D" id="1.20.1090.10">
    <property type="entry name" value="Dehydroquinate synthase-like - alpha domain"/>
    <property type="match status" value="1"/>
</dbReference>
<dbReference type="HAMAP" id="MF_00110">
    <property type="entry name" value="DHQ_synthase"/>
    <property type="match status" value="1"/>
</dbReference>
<dbReference type="InterPro" id="IPR050071">
    <property type="entry name" value="Dehydroquinate_synthase"/>
</dbReference>
<dbReference type="InterPro" id="IPR016037">
    <property type="entry name" value="DHQ_synth_AroB"/>
</dbReference>
<dbReference type="InterPro" id="IPR030963">
    <property type="entry name" value="DHQ_synth_fam"/>
</dbReference>
<dbReference type="InterPro" id="IPR030960">
    <property type="entry name" value="DHQS/DOIS_N"/>
</dbReference>
<dbReference type="InterPro" id="IPR056179">
    <property type="entry name" value="DHQS_C"/>
</dbReference>
<dbReference type="NCBIfam" id="TIGR01357">
    <property type="entry name" value="aroB"/>
    <property type="match status" value="1"/>
</dbReference>
<dbReference type="PANTHER" id="PTHR43622">
    <property type="entry name" value="3-DEHYDROQUINATE SYNTHASE"/>
    <property type="match status" value="1"/>
</dbReference>
<dbReference type="PANTHER" id="PTHR43622:SF7">
    <property type="entry name" value="3-DEHYDROQUINATE SYNTHASE, CHLOROPLASTIC"/>
    <property type="match status" value="1"/>
</dbReference>
<dbReference type="Pfam" id="PF01761">
    <property type="entry name" value="DHQ_synthase"/>
    <property type="match status" value="1"/>
</dbReference>
<dbReference type="Pfam" id="PF24621">
    <property type="entry name" value="DHQS_C"/>
    <property type="match status" value="1"/>
</dbReference>
<dbReference type="PIRSF" id="PIRSF001455">
    <property type="entry name" value="DHQ_synth"/>
    <property type="match status" value="1"/>
</dbReference>
<dbReference type="SUPFAM" id="SSF56796">
    <property type="entry name" value="Dehydroquinate synthase-like"/>
    <property type="match status" value="1"/>
</dbReference>
<protein>
    <recommendedName>
        <fullName evidence="1">3-dehydroquinate synthase</fullName>
        <shortName evidence="1">DHQS</shortName>
        <ecNumber evidence="1">4.2.3.4</ecNumber>
    </recommendedName>
</protein>
<reference key="1">
    <citation type="journal article" date="2005" name="Genome Res.">
        <title>Coping with cold: the genome of the versatile marine Antarctica bacterium Pseudoalteromonas haloplanktis TAC125.</title>
        <authorList>
            <person name="Medigue C."/>
            <person name="Krin E."/>
            <person name="Pascal G."/>
            <person name="Barbe V."/>
            <person name="Bernsel A."/>
            <person name="Bertin P.N."/>
            <person name="Cheung F."/>
            <person name="Cruveiller S."/>
            <person name="D'Amico S."/>
            <person name="Duilio A."/>
            <person name="Fang G."/>
            <person name="Feller G."/>
            <person name="Ho C."/>
            <person name="Mangenot S."/>
            <person name="Marino G."/>
            <person name="Nilsson J."/>
            <person name="Parrilli E."/>
            <person name="Rocha E.P.C."/>
            <person name="Rouy Z."/>
            <person name="Sekowska A."/>
            <person name="Tutino M.L."/>
            <person name="Vallenet D."/>
            <person name="von Heijne G."/>
            <person name="Danchin A."/>
        </authorList>
    </citation>
    <scope>NUCLEOTIDE SEQUENCE [LARGE SCALE GENOMIC DNA]</scope>
    <source>
        <strain>TAC 125</strain>
    </source>
</reference>